<name>ARNT_YERPE</name>
<comment type="function">
    <text evidence="1">Catalyzes the transfer of the L-Ara4N moiety of the glycolipid undecaprenyl phosphate-alpha-L-Ara4N to lipid A. The modified arabinose is attached to lipid A and is required for resistance to polymyxin and cationic antimicrobial peptides.</text>
</comment>
<comment type="catalytic activity">
    <reaction evidence="1">
        <text>4-amino-4-deoxy-alpha-L-arabinopyranosyl di-trans,octa-cis-undecaprenyl phosphate + lipid IVA = lipid IIA + di-trans,octa-cis-undecaprenyl phosphate.</text>
        <dbReference type="EC" id="2.4.2.43"/>
    </reaction>
</comment>
<comment type="pathway">
    <text evidence="1">Lipopolysaccharide metabolism; 4-amino-4-deoxy-beta-L-arabinose-lipid A biosynthesis.</text>
</comment>
<comment type="subcellular location">
    <subcellularLocation>
        <location evidence="1">Cell inner membrane</location>
        <topology evidence="1">Multi-pass membrane protein</topology>
    </subcellularLocation>
</comment>
<comment type="similarity">
    <text evidence="1">Belongs to the glycosyltransferase 83 family.</text>
</comment>
<dbReference type="EC" id="2.4.2.43" evidence="1"/>
<dbReference type="EMBL" id="AL590842">
    <property type="protein sequence ID" value="CAL21045.1"/>
    <property type="molecule type" value="Genomic_DNA"/>
</dbReference>
<dbReference type="EMBL" id="AE009952">
    <property type="protein sequence ID" value="AAM85488.1"/>
    <property type="molecule type" value="Genomic_DNA"/>
</dbReference>
<dbReference type="EMBL" id="AE017042">
    <property type="protein sequence ID" value="AAS62411.1"/>
    <property type="molecule type" value="Genomic_DNA"/>
</dbReference>
<dbReference type="PIR" id="AB0295">
    <property type="entry name" value="AB0295"/>
</dbReference>
<dbReference type="RefSeq" id="WP_002211821.1">
    <property type="nucleotide sequence ID" value="NZ_WUCM01000025.1"/>
</dbReference>
<dbReference type="RefSeq" id="YP_002347381.1">
    <property type="nucleotide sequence ID" value="NC_003143.1"/>
</dbReference>
<dbReference type="SMR" id="Q8ZDX9"/>
<dbReference type="IntAct" id="Q8ZDX9">
    <property type="interactions" value="1"/>
</dbReference>
<dbReference type="STRING" id="214092.YPO2418"/>
<dbReference type="PaxDb" id="214092-YPO2418"/>
<dbReference type="DNASU" id="1146868"/>
<dbReference type="EnsemblBacteria" id="AAS62411">
    <property type="protein sequence ID" value="AAS62411"/>
    <property type="gene ID" value="YP_2205"/>
</dbReference>
<dbReference type="GeneID" id="57976259"/>
<dbReference type="KEGG" id="ype:YPO2418"/>
<dbReference type="KEGG" id="ypk:y1921"/>
<dbReference type="KEGG" id="ypm:YP_2205"/>
<dbReference type="PATRIC" id="fig|214092.21.peg.2826"/>
<dbReference type="eggNOG" id="COG1807">
    <property type="taxonomic scope" value="Bacteria"/>
</dbReference>
<dbReference type="HOGENOM" id="CLU_019200_2_1_6"/>
<dbReference type="OMA" id="KGPLILM"/>
<dbReference type="OrthoDB" id="9775035at2"/>
<dbReference type="UniPathway" id="UPA00037"/>
<dbReference type="Proteomes" id="UP000000815">
    <property type="component" value="Chromosome"/>
</dbReference>
<dbReference type="Proteomes" id="UP000001019">
    <property type="component" value="Chromosome"/>
</dbReference>
<dbReference type="Proteomes" id="UP000002490">
    <property type="component" value="Chromosome"/>
</dbReference>
<dbReference type="GO" id="GO:0005886">
    <property type="term" value="C:plasma membrane"/>
    <property type="evidence" value="ECO:0000318"/>
    <property type="project" value="GO_Central"/>
</dbReference>
<dbReference type="GO" id="GO:0103015">
    <property type="term" value="F:4-amino-4-deoxy-L-arabinose transferase activity"/>
    <property type="evidence" value="ECO:0007669"/>
    <property type="project" value="UniProtKB-EC"/>
</dbReference>
<dbReference type="GO" id="GO:0000030">
    <property type="term" value="F:mannosyltransferase activity"/>
    <property type="evidence" value="ECO:0007669"/>
    <property type="project" value="InterPro"/>
</dbReference>
<dbReference type="GO" id="GO:0016763">
    <property type="term" value="F:pentosyltransferase activity"/>
    <property type="evidence" value="ECO:0000318"/>
    <property type="project" value="GO_Central"/>
</dbReference>
<dbReference type="GO" id="GO:0009245">
    <property type="term" value="P:lipid A biosynthetic process"/>
    <property type="evidence" value="ECO:0007669"/>
    <property type="project" value="UniProtKB-UniRule"/>
</dbReference>
<dbReference type="GO" id="GO:0009103">
    <property type="term" value="P:lipopolysaccharide biosynthetic process"/>
    <property type="evidence" value="ECO:0000318"/>
    <property type="project" value="GO_Central"/>
</dbReference>
<dbReference type="GO" id="GO:0006493">
    <property type="term" value="P:protein O-linked glycosylation"/>
    <property type="evidence" value="ECO:0007669"/>
    <property type="project" value="InterPro"/>
</dbReference>
<dbReference type="GO" id="GO:0010041">
    <property type="term" value="P:response to iron(III) ion"/>
    <property type="evidence" value="ECO:0000318"/>
    <property type="project" value="GO_Central"/>
</dbReference>
<dbReference type="HAMAP" id="MF_01165">
    <property type="entry name" value="ArnT_transfer"/>
    <property type="match status" value="1"/>
</dbReference>
<dbReference type="InterPro" id="IPR022839">
    <property type="entry name" value="ArnT_tfrase"/>
</dbReference>
<dbReference type="InterPro" id="IPR003342">
    <property type="entry name" value="Glyco_trans_39/83"/>
</dbReference>
<dbReference type="InterPro" id="IPR050297">
    <property type="entry name" value="LipidA_mod_glycosyltrf_83"/>
</dbReference>
<dbReference type="NCBIfam" id="NF009784">
    <property type="entry name" value="PRK13279.1"/>
    <property type="match status" value="1"/>
</dbReference>
<dbReference type="PANTHER" id="PTHR33908">
    <property type="entry name" value="MANNOSYLTRANSFERASE YKCB-RELATED"/>
    <property type="match status" value="1"/>
</dbReference>
<dbReference type="PANTHER" id="PTHR33908:SF3">
    <property type="entry name" value="UNDECAPRENYL PHOSPHATE-ALPHA-4-AMINO-4-DEOXY-L-ARABINOSE ARABINOSYL TRANSFERASE"/>
    <property type="match status" value="1"/>
</dbReference>
<dbReference type="Pfam" id="PF02366">
    <property type="entry name" value="PMT"/>
    <property type="match status" value="1"/>
</dbReference>
<proteinExistence type="inferred from homology"/>
<evidence type="ECO:0000255" key="1">
    <source>
        <dbReference type="HAMAP-Rule" id="MF_01165"/>
    </source>
</evidence>
<gene>
    <name evidence="1" type="primary">arnT</name>
    <name type="ordered locus">YPO2418</name>
    <name type="ordered locus">y1921</name>
    <name type="ordered locus">YP_2205</name>
</gene>
<protein>
    <recommendedName>
        <fullName evidence="1">Undecaprenyl phosphate-alpha-4-amino-4-deoxy-L-arabinose arabinosyl transferase</fullName>
        <ecNumber evidence="1">2.4.2.43</ecNumber>
    </recommendedName>
    <alternativeName>
        <fullName evidence="1">4-amino-4-deoxy-L-arabinose lipid A transferase</fullName>
    </alternativeName>
    <alternativeName>
        <fullName evidence="1">Lipid IV(A) 4-amino-4-deoxy-L-arabinosyltransferase</fullName>
    </alternativeName>
    <alternativeName>
        <fullName evidence="1">Undecaprenyl phosphate-alpha-L-Ara4N transferase</fullName>
    </alternativeName>
</protein>
<sequence>MKLLKDSGAALLALFFVLVYLLPVNSRLLWQPDETRYAEISREMLQRGDWVVPYFMDIRYFEKPVAGYWFNNISQWIFGDSNFAVRFGSIFSTALSAVLVYWLATLLWRNRSTSVLATLIYLSFLLVFGIGTYAVLDPMISLWLTAAMVSFYLTLKAENWQQKVGAYALLGVACGMGFMTKGFLALAVPVIAVLPIVIQQKRIKDLVVFGPIAIVCAVLLSLPWALAIAQREPDFWNYFFWVEHIQRFAEASAQHKSPIWYYLPILCIGVLPWLGLLPGALFKGWRERATKPELFFLLSWVVMPLLFFSVAKGKLPTYILPCMAPLSLLMAAYATDCANNIRMRALKINGVINLLFGVACALVIVVIGLGLVKDIVAYGPQENQKVWLGVLAFAGWGVTGFITLRNNARNWRWAAACPLLFILLVGYLIPQQVVDSKQPQNFIKNNFSELSSSRYVLTDSVGVAAGLAWELKRSDILMFSEKGELTYGLAYPDSQDNYISNDDFPTWLAQARKEGDVSLVVQLAKNEALPAHLPPADKVNLMNRLALLWYQKTP</sequence>
<accession>Q8ZDX9</accession>
<accession>Q0WEA7</accession>
<accession>Q74TF7</accession>
<accession>Q7CIT8</accession>
<feature type="chain" id="PRO_0000121515" description="Undecaprenyl phosphate-alpha-4-amino-4-deoxy-L-arabinose arabinosyl transferase">
    <location>
        <begin position="1"/>
        <end position="554"/>
    </location>
</feature>
<feature type="transmembrane region" description="Helical" evidence="1">
    <location>
        <begin position="87"/>
        <end position="107"/>
    </location>
</feature>
<feature type="transmembrane region" description="Helical" evidence="1">
    <location>
        <begin position="115"/>
        <end position="135"/>
    </location>
</feature>
<feature type="transmembrane region" description="Helical" evidence="1">
    <location>
        <begin position="178"/>
        <end position="198"/>
    </location>
</feature>
<feature type="transmembrane region" description="Helical" evidence="1">
    <location>
        <begin position="206"/>
        <end position="226"/>
    </location>
</feature>
<feature type="transmembrane region" description="Helical" evidence="1">
    <location>
        <begin position="262"/>
        <end position="282"/>
    </location>
</feature>
<feature type="transmembrane region" description="Helical" evidence="1">
    <location>
        <begin position="293"/>
        <end position="313"/>
    </location>
</feature>
<feature type="transmembrane region" description="Helical" evidence="1">
    <location>
        <begin position="315"/>
        <end position="335"/>
    </location>
</feature>
<feature type="transmembrane region" description="Helical" evidence="1">
    <location>
        <begin position="351"/>
        <end position="371"/>
    </location>
</feature>
<feature type="transmembrane region" description="Helical" evidence="1">
    <location>
        <begin position="384"/>
        <end position="404"/>
    </location>
</feature>
<feature type="transmembrane region" description="Helical" evidence="1">
    <location>
        <begin position="414"/>
        <end position="434"/>
    </location>
</feature>
<organism>
    <name type="scientific">Yersinia pestis</name>
    <dbReference type="NCBI Taxonomy" id="632"/>
    <lineage>
        <taxon>Bacteria</taxon>
        <taxon>Pseudomonadati</taxon>
        <taxon>Pseudomonadota</taxon>
        <taxon>Gammaproteobacteria</taxon>
        <taxon>Enterobacterales</taxon>
        <taxon>Yersiniaceae</taxon>
        <taxon>Yersinia</taxon>
    </lineage>
</organism>
<keyword id="KW-0997">Cell inner membrane</keyword>
<keyword id="KW-1003">Cell membrane</keyword>
<keyword id="KW-0328">Glycosyltransferase</keyword>
<keyword id="KW-0441">Lipid A biosynthesis</keyword>
<keyword id="KW-0444">Lipid biosynthesis</keyword>
<keyword id="KW-0443">Lipid metabolism</keyword>
<keyword id="KW-0448">Lipopolysaccharide biosynthesis</keyword>
<keyword id="KW-0472">Membrane</keyword>
<keyword id="KW-1185">Reference proteome</keyword>
<keyword id="KW-0808">Transferase</keyword>
<keyword id="KW-0812">Transmembrane</keyword>
<keyword id="KW-1133">Transmembrane helix</keyword>
<reference key="1">
    <citation type="journal article" date="2001" name="Nature">
        <title>Genome sequence of Yersinia pestis, the causative agent of plague.</title>
        <authorList>
            <person name="Parkhill J."/>
            <person name="Wren B.W."/>
            <person name="Thomson N.R."/>
            <person name="Titball R.W."/>
            <person name="Holden M.T.G."/>
            <person name="Prentice M.B."/>
            <person name="Sebaihia M."/>
            <person name="James K.D."/>
            <person name="Churcher C.M."/>
            <person name="Mungall K.L."/>
            <person name="Baker S."/>
            <person name="Basham D."/>
            <person name="Bentley S.D."/>
            <person name="Brooks K."/>
            <person name="Cerdeno-Tarraga A.-M."/>
            <person name="Chillingworth T."/>
            <person name="Cronin A."/>
            <person name="Davies R.M."/>
            <person name="Davis P."/>
            <person name="Dougan G."/>
            <person name="Feltwell T."/>
            <person name="Hamlin N."/>
            <person name="Holroyd S."/>
            <person name="Jagels K."/>
            <person name="Karlyshev A.V."/>
            <person name="Leather S."/>
            <person name="Moule S."/>
            <person name="Oyston P.C.F."/>
            <person name="Quail M.A."/>
            <person name="Rutherford K.M."/>
            <person name="Simmonds M."/>
            <person name="Skelton J."/>
            <person name="Stevens K."/>
            <person name="Whitehead S."/>
            <person name="Barrell B.G."/>
        </authorList>
    </citation>
    <scope>NUCLEOTIDE SEQUENCE [LARGE SCALE GENOMIC DNA]</scope>
    <source>
        <strain>CO-92 / Biovar Orientalis</strain>
    </source>
</reference>
<reference key="2">
    <citation type="journal article" date="2002" name="J. Bacteriol.">
        <title>Genome sequence of Yersinia pestis KIM.</title>
        <authorList>
            <person name="Deng W."/>
            <person name="Burland V."/>
            <person name="Plunkett G. III"/>
            <person name="Boutin A."/>
            <person name="Mayhew G.F."/>
            <person name="Liss P."/>
            <person name="Perna N.T."/>
            <person name="Rose D.J."/>
            <person name="Mau B."/>
            <person name="Zhou S."/>
            <person name="Schwartz D.C."/>
            <person name="Fetherston J.D."/>
            <person name="Lindler L.E."/>
            <person name="Brubaker R.R."/>
            <person name="Plano G.V."/>
            <person name="Straley S.C."/>
            <person name="McDonough K.A."/>
            <person name="Nilles M.L."/>
            <person name="Matson J.S."/>
            <person name="Blattner F.R."/>
            <person name="Perry R.D."/>
        </authorList>
    </citation>
    <scope>NUCLEOTIDE SEQUENCE [LARGE SCALE GENOMIC DNA]</scope>
    <source>
        <strain>KIM10+ / Biovar Mediaevalis</strain>
    </source>
</reference>
<reference key="3">
    <citation type="journal article" date="2004" name="DNA Res.">
        <title>Complete genome sequence of Yersinia pestis strain 91001, an isolate avirulent to humans.</title>
        <authorList>
            <person name="Song Y."/>
            <person name="Tong Z."/>
            <person name="Wang J."/>
            <person name="Wang L."/>
            <person name="Guo Z."/>
            <person name="Han Y."/>
            <person name="Zhang J."/>
            <person name="Pei D."/>
            <person name="Zhou D."/>
            <person name="Qin H."/>
            <person name="Pang X."/>
            <person name="Han Y."/>
            <person name="Zhai J."/>
            <person name="Li M."/>
            <person name="Cui B."/>
            <person name="Qi Z."/>
            <person name="Jin L."/>
            <person name="Dai R."/>
            <person name="Chen F."/>
            <person name="Li S."/>
            <person name="Ye C."/>
            <person name="Du Z."/>
            <person name="Lin W."/>
            <person name="Wang J."/>
            <person name="Yu J."/>
            <person name="Yang H."/>
            <person name="Wang J."/>
            <person name="Huang P."/>
            <person name="Yang R."/>
        </authorList>
    </citation>
    <scope>NUCLEOTIDE SEQUENCE [LARGE SCALE GENOMIC DNA]</scope>
    <source>
        <strain>91001 / Biovar Mediaevalis</strain>
    </source>
</reference>